<reference key="1">
    <citation type="journal article" date="1994" name="Gene">
        <title>Sequence of a human cDNA encoding phosphatidylinositol transfer protein and occurrence of a related sequence in widely divergent eukaryotes.</title>
        <authorList>
            <person name="Dickeson S.K."/>
            <person name="Helmkamp G.M. Jr."/>
            <person name="Yarbrough L.R."/>
        </authorList>
    </citation>
    <scope>NUCLEOTIDE SEQUENCE [MRNA]</scope>
    <source>
        <tissue>Testis</tissue>
    </source>
</reference>
<reference key="2">
    <citation type="submission" date="1995-11" db="EMBL/GenBank/DDBJ databases">
        <authorList>
            <person name="Tanaka S."/>
            <person name="Yamashita S."/>
            <person name="Hosaka K."/>
        </authorList>
    </citation>
    <scope>NUCLEOTIDE SEQUENCE [MRNA]</scope>
    <source>
        <tissue>Brain</tissue>
    </source>
</reference>
<reference key="3">
    <citation type="journal article" date="2004" name="Genome Res.">
        <title>The status, quality, and expansion of the NIH full-length cDNA project: the Mammalian Gene Collection (MGC).</title>
        <authorList>
            <consortium name="The MGC Project Team"/>
        </authorList>
    </citation>
    <scope>NUCLEOTIDE SEQUENCE [LARGE SCALE MRNA]</scope>
    <source>
        <tissue>Brain</tissue>
        <tissue>Ovary</tissue>
    </source>
</reference>
<reference key="4">
    <citation type="submission" date="2007-03" db="UniProtKB">
        <authorList>
            <person name="Lubec G."/>
            <person name="Afjehi-Sadat L."/>
        </authorList>
    </citation>
    <scope>PROTEIN SEQUENCE OF 135-146</scope>
    <scope>IDENTIFICATION BY MASS SPECTROMETRY</scope>
    <source>
        <tissue>Brain</tissue>
        <tissue>Cajal-Retzius cell</tissue>
    </source>
</reference>
<reference key="5">
    <citation type="journal article" date="1999" name="J. Biol. Chem.">
        <title>Cloning and characterization of a novel human phosphatidylinositol transfer protein, rdgBbeta.</title>
        <authorList>
            <person name="Fullwood Y."/>
            <person name="dos Santos M."/>
            <person name="Hsuan J.J."/>
        </authorList>
    </citation>
    <scope>FUNCTION</scope>
    <scope>CATALYTIC ACTIVITY</scope>
</reference>
<reference key="6">
    <citation type="journal article" date="2004" name="Biochim. Biophys. Acta">
        <title>Acyl chain-based molecular selectivity for HL60 cellular phosphatidylinositol and of phosphatidylcholine by phosphatidylinositol transfer protein alpha.</title>
        <authorList>
            <person name="Hunt A.N."/>
            <person name="Skippen A.J."/>
            <person name="Koster G."/>
            <person name="Postle A.D."/>
            <person name="Cockcroft S."/>
        </authorList>
    </citation>
    <scope>FUNCTION</scope>
    <scope>CATALYTIC ACTIVITY</scope>
</reference>
<reference key="7">
    <citation type="journal article" date="2008" name="Traffic">
        <title>Dynamics of lipid transfer by phosphatidylinositol transfer proteins in cells.</title>
        <authorList>
            <person name="Shadan S."/>
            <person name="Holic R."/>
            <person name="Carvou N."/>
            <person name="Ee P."/>
            <person name="Li M."/>
            <person name="Murray-Rust J."/>
            <person name="Cockcroft S."/>
        </authorList>
    </citation>
    <scope>FUNCTION</scope>
    <scope>CATALYTIC ACTIVITY</scope>
    <scope>ACTIVITY REGULATION</scope>
    <scope>MUTAGENESIS OF CYS-94; CYS-187 AND 202-TRP-TRP-203</scope>
</reference>
<reference key="8">
    <citation type="journal article" date="2009" name="Science">
        <title>Lysine acetylation targets protein complexes and co-regulates major cellular functions.</title>
        <authorList>
            <person name="Choudhary C."/>
            <person name="Kumar C."/>
            <person name="Gnad F."/>
            <person name="Nielsen M.L."/>
            <person name="Rehman M."/>
            <person name="Walther T.C."/>
            <person name="Olsen J.V."/>
            <person name="Mann M."/>
        </authorList>
    </citation>
    <scope>ACETYLATION [LARGE SCALE ANALYSIS] AT LYS-215</scope>
    <scope>IDENTIFICATION BY MASS SPECTROMETRY [LARGE SCALE ANALYSIS]</scope>
</reference>
<reference key="9">
    <citation type="journal article" date="2011" name="BMC Syst. Biol.">
        <title>Initial characterization of the human central proteome.</title>
        <authorList>
            <person name="Burkard T.R."/>
            <person name="Planyavsky M."/>
            <person name="Kaupe I."/>
            <person name="Breitwieser F.P."/>
            <person name="Buerckstuemmer T."/>
            <person name="Bennett K.L."/>
            <person name="Superti-Furga G."/>
            <person name="Colinge J."/>
        </authorList>
    </citation>
    <scope>IDENTIFICATION BY MASS SPECTROMETRY [LARGE SCALE ANALYSIS]</scope>
</reference>
<reference key="10">
    <citation type="journal article" date="2012" name="J. Biol. Chem.">
        <title>Phosphatidylinositol transfer protein, cytoplasmic 1 (PITPNC1) binds and transfers phosphatidic acid.</title>
        <authorList>
            <person name="Garner K."/>
            <person name="Hunt A.N."/>
            <person name="Koster G."/>
            <person name="Somerharju P."/>
            <person name="Groves E."/>
            <person name="Li M."/>
            <person name="Raghu P."/>
            <person name="Holic R."/>
            <person name="Cockcroft S."/>
        </authorList>
    </citation>
    <scope>FUNCTION</scope>
    <scope>CATALYTIC ACTIVITY</scope>
</reference>
<reference key="11">
    <citation type="journal article" date="2012" name="Proc. Natl. Acad. Sci. U.S.A.">
        <title>N-terminal acetylome analyses and functional insights of the N-terminal acetyltransferase NatB.</title>
        <authorList>
            <person name="Van Damme P."/>
            <person name="Lasa M."/>
            <person name="Polevoda B."/>
            <person name="Gazquez C."/>
            <person name="Elosegui-Artola A."/>
            <person name="Kim D.S."/>
            <person name="De Juan-Pardo E."/>
            <person name="Demeyer K."/>
            <person name="Hole K."/>
            <person name="Larrea E."/>
            <person name="Timmerman E."/>
            <person name="Prieto J."/>
            <person name="Arnesen T."/>
            <person name="Sherman F."/>
            <person name="Gevaert K."/>
            <person name="Aldabe R."/>
        </authorList>
    </citation>
    <scope>IDENTIFICATION BY MASS SPECTROMETRY [LARGE SCALE ANALYSIS]</scope>
</reference>
<reference key="12">
    <citation type="journal article" date="2004" name="Structure">
        <title>Structure-function analysis of human phosphatidylinositol transfer protein alpha bound to phosphatidylinositol.</title>
        <authorList>
            <person name="Tilley S.J."/>
            <person name="Skippen A."/>
            <person name="Murray-Rust J."/>
            <person name="Swigart P.M."/>
            <person name="Stewart A."/>
            <person name="Morgan C.P."/>
            <person name="Cockcroft S."/>
            <person name="McDonald N.Q."/>
        </authorList>
    </citation>
    <scope>X-RAY CRYSTALLOGRAPHY (2.9 ANGSTROMS) IN COMPLEX WITH PHOSPHATIDYLINOSITOL</scope>
    <scope>FUNCTION</scope>
    <scope>CATALYTIC ACTIVITY</scope>
    <scope>PHOSPHATIDYLINOSITOL LIPID HEADGROUP BINDING</scope>
    <scope>MUTAGENESIS OF THR-58; LYS-60; GLU-85; ASN-89; TYR-102 AND 202-TRP-TRP-203</scope>
</reference>
<protein>
    <recommendedName>
        <fullName>Phosphatidylinositol transfer protein alpha isoform</fullName>
        <shortName>PI-TP-alpha</shortName>
        <shortName>PtdIns transfer protein alpha</shortName>
        <shortName>PtdInsTP alpha</shortName>
    </recommendedName>
</protein>
<feature type="initiator methionine" description="Removed" evidence="2">
    <location>
        <position position="1"/>
    </location>
</feature>
<feature type="chain" id="PRO_0000191639" description="Phosphatidylinositol transfer protein alpha isoform">
    <location>
        <begin position="2"/>
        <end position="270"/>
    </location>
</feature>
<feature type="region of interest" description="Disordered" evidence="3">
    <location>
        <begin position="250"/>
        <end position="270"/>
    </location>
</feature>
<feature type="compositionally biased region" description="Basic and acidic residues" evidence="3">
    <location>
        <begin position="250"/>
        <end position="263"/>
    </location>
</feature>
<feature type="binding site" evidence="5">
    <location>
        <position position="58"/>
    </location>
    <ligand>
        <name>a 1,2-diacyl-sn-glycero-3-phospho-(1D-myo-inositol)</name>
        <dbReference type="ChEBI" id="CHEBI:57880"/>
    </ligand>
</feature>
<feature type="binding site" evidence="5">
    <location>
        <position position="60"/>
    </location>
    <ligand>
        <name>a 1,2-diacyl-sn-glycero-3-phospho-(1D-myo-inositol)</name>
        <dbReference type="ChEBI" id="CHEBI:57880"/>
    </ligand>
</feature>
<feature type="binding site" evidence="5">
    <location>
        <position position="85"/>
    </location>
    <ligand>
        <name>a 1,2-diacyl-sn-glycero-3-phospho-(1D-myo-inositol)</name>
        <dbReference type="ChEBI" id="CHEBI:57880"/>
    </ligand>
</feature>
<feature type="binding site" evidence="5">
    <location>
        <position position="89"/>
    </location>
    <ligand>
        <name>a 1,2-diacyl-sn-glycero-3-phospho-(1D-myo-inositol)</name>
        <dbReference type="ChEBI" id="CHEBI:57880"/>
    </ligand>
</feature>
<feature type="binding site" evidence="5">
    <location>
        <position position="96"/>
    </location>
    <ligand>
        <name>a 1,2-diacyl-sn-glycero-3-phospho-(1D-myo-inositol)</name>
        <dbReference type="ChEBI" id="CHEBI:57880"/>
    </ligand>
</feature>
<feature type="binding site" evidence="5">
    <location>
        <position position="194"/>
    </location>
    <ligand>
        <name>a 1,2-diacyl-sn-glycero-3-phospho-(1D-myo-inositol)</name>
        <dbReference type="ChEBI" id="CHEBI:57880"/>
    </ligand>
</feature>
<feature type="modified residue" description="N6-acetyllysine" evidence="12">
    <location>
        <position position="215"/>
    </location>
</feature>
<feature type="mutagenesis site" description="Reduced phosphatidylinositol and phosphatidylcholine transfer activity." evidence="5">
    <original>T</original>
    <variation>A</variation>
    <location>
        <position position="58"/>
    </location>
</feature>
<feature type="mutagenesis site" description="Complete loss of phosphatidylinositol transfer activity but no effect on phosphatidylcholine transfer activity." evidence="5">
    <original>T</original>
    <variation>E</variation>
    <location>
        <position position="58"/>
    </location>
</feature>
<feature type="mutagenesis site" description="Reduced phosphatidylinositol transfer activity but no effect on phosphatidylcholine transfer activity." evidence="5">
    <original>T</original>
    <variation>S</variation>
    <location>
        <position position="58"/>
    </location>
</feature>
<feature type="mutagenesis site" description="Complete loss of phosphatidylinositol transfer activity but no effect on phosphatidylcholine transfer activity." evidence="5">
    <original>K</original>
    <variation>A</variation>
    <location>
        <position position="60"/>
    </location>
</feature>
<feature type="mutagenesis site" description="Reduced phosphatidylinositol transfer activity but no effect on phosphatidylcholine transfer activity." evidence="5">
    <original>E</original>
    <variation>A</variation>
    <location>
        <position position="85"/>
    </location>
</feature>
<feature type="mutagenesis site" description="Reduced phosphatidylinositol and phosphatidylcholine transfer activity." evidence="5">
    <original>E</original>
    <variation>Q</variation>
    <location>
        <position position="85"/>
    </location>
</feature>
<feature type="mutagenesis site" description="Significant loss of phosphatidylinositol transfer activity but no effect on phosphatidylcholine transfer activity." evidence="5">
    <original>N</original>
    <variation>F</variation>
    <variation>L</variation>
    <location>
        <position position="89"/>
    </location>
</feature>
<feature type="mutagenesis site" description="No effect on phosphatidylinositol transfer activity. Resistant to inhibition by N-ethylmaleimide." evidence="7">
    <original>C</original>
    <variation>A</variation>
    <variation>T</variation>
    <location>
        <position position="94"/>
    </location>
</feature>
<feature type="mutagenesis site" description="Reduced phosphatidylinositol and phosphatidylcholine transfer activity." evidence="5">
    <original>Y</original>
    <variation>A</variation>
    <location>
        <position position="102"/>
    </location>
</feature>
<feature type="mutagenesis site" description="No effect on phosphatidylinositol transfer activity." evidence="7">
    <original>C</original>
    <variation>A</variation>
    <location>
        <position position="187"/>
    </location>
</feature>
<feature type="mutagenesis site" description="Significant loss of phosphatidylinositol and phosphatidylcholine transfer activity." evidence="5 7">
    <original>WW</original>
    <variation>AA</variation>
    <location>
        <begin position="202"/>
        <end position="203"/>
    </location>
</feature>
<feature type="sequence conflict" description="In Ref. 2; BAA06276." evidence="9" ref="2">
    <original>N</original>
    <variation>P</variation>
    <location>
        <position position="45"/>
    </location>
</feature>
<feature type="strand" evidence="13">
    <location>
        <begin position="3"/>
        <end position="13"/>
    </location>
</feature>
<feature type="helix" evidence="13">
    <location>
        <begin position="15"/>
        <end position="33"/>
    </location>
</feature>
<feature type="strand" evidence="13">
    <location>
        <begin position="38"/>
        <end position="49"/>
    </location>
</feature>
<feature type="strand" evidence="13">
    <location>
        <begin position="54"/>
        <end position="65"/>
    </location>
</feature>
<feature type="helix" evidence="13">
    <location>
        <begin position="70"/>
        <end position="73"/>
    </location>
</feature>
<feature type="strand" evidence="13">
    <location>
        <begin position="81"/>
        <end position="90"/>
    </location>
</feature>
<feature type="strand" evidence="13">
    <location>
        <begin position="93"/>
        <end position="99"/>
    </location>
</feature>
<feature type="helix" evidence="13">
    <location>
        <begin position="101"/>
        <end position="103"/>
    </location>
</feature>
<feature type="strand" evidence="13">
    <location>
        <begin position="106"/>
        <end position="120"/>
    </location>
</feature>
<feature type="turn" evidence="13">
    <location>
        <begin position="123"/>
        <end position="126"/>
    </location>
</feature>
<feature type="helix" evidence="13">
    <location>
        <begin position="130"/>
        <end position="133"/>
    </location>
</feature>
<feature type="strand" evidence="13">
    <location>
        <begin position="137"/>
        <end position="141"/>
    </location>
</feature>
<feature type="helix" evidence="13">
    <location>
        <begin position="146"/>
        <end position="148"/>
    </location>
</feature>
<feature type="helix" evidence="13">
    <location>
        <begin position="151"/>
        <end position="153"/>
    </location>
</feature>
<feature type="helix" evidence="13">
    <location>
        <begin position="156"/>
        <end position="158"/>
    </location>
</feature>
<feature type="helix" evidence="13">
    <location>
        <begin position="160"/>
        <end position="162"/>
    </location>
</feature>
<feature type="turn" evidence="13">
    <location>
        <begin position="166"/>
        <end position="168"/>
    </location>
</feature>
<feature type="helix" evidence="13">
    <location>
        <begin position="177"/>
        <end position="182"/>
    </location>
</feature>
<feature type="strand" evidence="13">
    <location>
        <begin position="190"/>
        <end position="200"/>
    </location>
</feature>
<feature type="turn" evidence="13">
    <location>
        <begin position="203"/>
        <end position="205"/>
    </location>
</feature>
<feature type="helix" evidence="13">
    <location>
        <begin position="206"/>
        <end position="230"/>
    </location>
</feature>
<feature type="helix" evidence="13">
    <location>
        <begin position="232"/>
        <end position="235"/>
    </location>
</feature>
<feature type="helix" evidence="13">
    <location>
        <begin position="240"/>
        <end position="260"/>
    </location>
</feature>
<comment type="function">
    <text evidence="4 5 6 7 8">Catalyzes the transfer of phosphatidylinositol (PI) and phosphatidylcholine (PC) between membranes (PubMed:10531358, PubMed:14962392, PubMed:15522822, PubMed:18636990, PubMed:22822086). Shows a preference for PI and PC containing shorter saturated or monosaturated acyl chains at the sn-1 and sn-2 positions (PubMed:15522822, PubMed:22822086). Preference order for PC is C16:1 &gt; C16:0 &gt; C18:1 &gt; C18:0 &gt; C20:4 and for PI is C16:1 &gt; C16:0 &gt; C18:1 &gt; C18:0 &gt; C20:4 &gt; C20:3 (PubMed:22822086).</text>
</comment>
<comment type="catalytic activity">
    <reaction evidence="5 6 8">
        <text>a 1,2-diacyl-sn-glycero-3-phosphocholine(in) = a 1,2-diacyl-sn-glycero-3-phosphocholine(out)</text>
        <dbReference type="Rhea" id="RHEA:38571"/>
        <dbReference type="ChEBI" id="CHEBI:57643"/>
    </reaction>
    <physiologicalReaction direction="left-to-right" evidence="11">
        <dbReference type="Rhea" id="RHEA:38572"/>
    </physiologicalReaction>
</comment>
<comment type="catalytic activity">
    <reaction evidence="4 5 6 7 8">
        <text>a 1,2-diacyl-sn-glycero-3-phospho-(1D-myo-inositol)(in) = a 1,2-diacyl-sn-glycero-3-phospho-(1D-myo-inositol)(out)</text>
        <dbReference type="Rhea" id="RHEA:38691"/>
        <dbReference type="ChEBI" id="CHEBI:57880"/>
    </reaction>
    <physiologicalReaction direction="left-to-right" evidence="10">
        <dbReference type="Rhea" id="RHEA:38692"/>
    </physiologicalReaction>
</comment>
<comment type="activity regulation">
    <text evidence="7">Phosphatidylinositol transfer activity is inhibited by N-ethylmaleimide.</text>
</comment>
<comment type="interaction">
    <interactant intactId="EBI-1042490">
        <id>Q00169</id>
    </interactant>
    <interactant intactId="EBI-718729">
        <id>P55212</id>
        <label>CASP6</label>
    </interactant>
    <organismsDiffer>false</organismsDiffer>
    <experiments>3</experiments>
</comment>
<comment type="interaction">
    <interactant intactId="EBI-1042490">
        <id>Q00169</id>
    </interactant>
    <interactant intactId="EBI-21591415">
        <id>P13473-2</id>
        <label>LAMP2</label>
    </interactant>
    <organismsDiffer>false</organismsDiffer>
    <experiments>3</experiments>
</comment>
<comment type="interaction">
    <interactant intactId="EBI-1042490">
        <id>Q00169</id>
    </interactant>
    <interactant intactId="EBI-2623095">
        <id>Q9Y371</id>
        <label>SH3GLB1</label>
    </interactant>
    <organismsDiffer>false</organismsDiffer>
    <experiments>3</experiments>
</comment>
<comment type="interaction">
    <interactant intactId="EBI-1042490">
        <id>Q00169</id>
    </interactant>
    <interactant intactId="EBI-1052596">
        <id>P31930</id>
        <label>UQCRC1</label>
    </interactant>
    <organismsDiffer>false</organismsDiffer>
    <experiments>3</experiments>
</comment>
<comment type="subcellular location">
    <subcellularLocation>
        <location evidence="1">Cytoplasm</location>
    </subcellularLocation>
    <subcellularLocation>
        <location evidence="1">Nucleus</location>
    </subcellularLocation>
</comment>
<comment type="similarity">
    <text evidence="9">Belongs to the PtdIns transfer protein family. PI transfer class I subfamily.</text>
</comment>
<accession>Q00169</accession>
<proteinExistence type="evidence at protein level"/>
<name>PIPNA_HUMAN</name>
<sequence length="270" mass="31806">MVLLKEYRVILPVSVDEYQVGQLYSVAEASKNETGGGEGVEVLVNEPYEKDGEKGQYTHKIYHLQSKVPTFVRMLAPEGALNIHEKAWNAYPYCRTVITNEYMKEDFLIKIETWHKPDLGTQENVHKLEPEAWKHVEAVYIDIADRSQVLSKDYKAEEDPAKFKSIKTGRGPLGPNWKQELVNQKDCPYMCAYKLVTVKFKWWGLQNKVENFIHKQERRLFTNFHRQLFCWLDKWVDLTMDDIRRMEEETKRQLDEMRQKDPVKGMTADD</sequence>
<evidence type="ECO:0000250" key="1">
    <source>
        <dbReference type="UniProtKB" id="P53810"/>
    </source>
</evidence>
<evidence type="ECO:0000250" key="2">
    <source>
        <dbReference type="UniProtKB" id="Q2HJ54"/>
    </source>
</evidence>
<evidence type="ECO:0000256" key="3">
    <source>
        <dbReference type="SAM" id="MobiDB-lite"/>
    </source>
</evidence>
<evidence type="ECO:0000269" key="4">
    <source>
    </source>
</evidence>
<evidence type="ECO:0000269" key="5">
    <source>
    </source>
</evidence>
<evidence type="ECO:0000269" key="6">
    <source>
    </source>
</evidence>
<evidence type="ECO:0000269" key="7">
    <source>
    </source>
</evidence>
<evidence type="ECO:0000269" key="8">
    <source>
    </source>
</evidence>
<evidence type="ECO:0000305" key="9"/>
<evidence type="ECO:0000305" key="10">
    <source>
    </source>
</evidence>
<evidence type="ECO:0000305" key="11">
    <source>
    </source>
</evidence>
<evidence type="ECO:0007744" key="12">
    <source>
    </source>
</evidence>
<evidence type="ECO:0007829" key="13">
    <source>
        <dbReference type="PDB" id="1UW5"/>
    </source>
</evidence>
<dbReference type="EMBL" id="M73704">
    <property type="protein sequence ID" value="AAA36441.1"/>
    <property type="molecule type" value="mRNA"/>
</dbReference>
<dbReference type="EMBL" id="D30036">
    <property type="protein sequence ID" value="BAA06276.1"/>
    <property type="molecule type" value="mRNA"/>
</dbReference>
<dbReference type="EMBL" id="BC082976">
    <property type="protein sequence ID" value="AAH82976.1"/>
    <property type="molecule type" value="mRNA"/>
</dbReference>
<dbReference type="EMBL" id="BC045108">
    <property type="protein sequence ID" value="AAH45108.1"/>
    <property type="molecule type" value="mRNA"/>
</dbReference>
<dbReference type="CCDS" id="CCDS45563.1"/>
<dbReference type="PIR" id="I53775">
    <property type="entry name" value="I53775"/>
</dbReference>
<dbReference type="RefSeq" id="NP_006215.1">
    <property type="nucleotide sequence ID" value="NM_006224.4"/>
</dbReference>
<dbReference type="PDB" id="1UW5">
    <property type="method" value="X-ray"/>
    <property type="resolution" value="2.90 A"/>
    <property type="chains" value="A/B/C/D=1-270"/>
</dbReference>
<dbReference type="PDB" id="8PQO">
    <property type="method" value="X-ray"/>
    <property type="resolution" value="2.30 A"/>
    <property type="chains" value="A=1-270"/>
</dbReference>
<dbReference type="PDBsum" id="1UW5"/>
<dbReference type="PDBsum" id="8PQO"/>
<dbReference type="SMR" id="Q00169"/>
<dbReference type="BioGRID" id="111323">
    <property type="interactions" value="40"/>
</dbReference>
<dbReference type="FunCoup" id="Q00169">
    <property type="interactions" value="3703"/>
</dbReference>
<dbReference type="IntAct" id="Q00169">
    <property type="interactions" value="18"/>
</dbReference>
<dbReference type="MINT" id="Q00169"/>
<dbReference type="STRING" id="9606.ENSP00000316809"/>
<dbReference type="DrugBank" id="DB03690">
    <property type="generic name" value="(Z,Z)-4-Hydroxy-N,N,N-Trimethyl-10-Oxo-7-[(1-Oxo-9-Octadecenyl)Oxy]-3,5,9-Trioxa-4-Phosphaheptacos-18-En-1-Aminium-4-Oxide"/>
</dbReference>
<dbReference type="DrugBank" id="DB02144">
    <property type="generic name" value="1,2-diacyl-sn-glycero-3-phosphoinositol"/>
</dbReference>
<dbReference type="SwissLipids" id="SLP:000000415"/>
<dbReference type="GlyGen" id="Q00169">
    <property type="glycosylation" value="1 site, 1 O-linked glycan (1 site)"/>
</dbReference>
<dbReference type="iPTMnet" id="Q00169"/>
<dbReference type="MetOSite" id="Q00169"/>
<dbReference type="PhosphoSitePlus" id="Q00169"/>
<dbReference type="BioMuta" id="PITPNA"/>
<dbReference type="jPOST" id="Q00169"/>
<dbReference type="MassIVE" id="Q00169"/>
<dbReference type="PaxDb" id="9606-ENSP00000316809"/>
<dbReference type="PeptideAtlas" id="Q00169"/>
<dbReference type="ProteomicsDB" id="57841"/>
<dbReference type="Pumba" id="Q00169"/>
<dbReference type="Antibodypedia" id="5311">
    <property type="antibodies" value="189 antibodies from 32 providers"/>
</dbReference>
<dbReference type="DNASU" id="5306"/>
<dbReference type="Ensembl" id="ENST00000313486.12">
    <property type="protein sequence ID" value="ENSP00000316809.7"/>
    <property type="gene ID" value="ENSG00000174238.16"/>
</dbReference>
<dbReference type="GeneID" id="5306"/>
<dbReference type="KEGG" id="hsa:5306"/>
<dbReference type="MANE-Select" id="ENST00000313486.12">
    <property type="protein sequence ID" value="ENSP00000316809.7"/>
    <property type="RefSeq nucleotide sequence ID" value="NM_006224.4"/>
    <property type="RefSeq protein sequence ID" value="NP_006215.1"/>
</dbReference>
<dbReference type="AGR" id="HGNC:9001"/>
<dbReference type="CTD" id="5306"/>
<dbReference type="DisGeNET" id="5306"/>
<dbReference type="GeneCards" id="PITPNA"/>
<dbReference type="HGNC" id="HGNC:9001">
    <property type="gene designation" value="PITPNA"/>
</dbReference>
<dbReference type="HPA" id="ENSG00000174238">
    <property type="expression patterns" value="Low tissue specificity"/>
</dbReference>
<dbReference type="MIM" id="600174">
    <property type="type" value="gene"/>
</dbReference>
<dbReference type="neXtProt" id="NX_Q00169"/>
<dbReference type="OpenTargets" id="ENSG00000174238"/>
<dbReference type="PharmGKB" id="PA33335"/>
<dbReference type="VEuPathDB" id="HostDB:ENSG00000174238"/>
<dbReference type="eggNOG" id="KOG3668">
    <property type="taxonomic scope" value="Eukaryota"/>
</dbReference>
<dbReference type="GeneTree" id="ENSGT00940000157119"/>
<dbReference type="HOGENOM" id="CLU_046509_0_0_1"/>
<dbReference type="InParanoid" id="Q00169"/>
<dbReference type="OMA" id="QHNVHEL"/>
<dbReference type="OrthoDB" id="18453at2759"/>
<dbReference type="PAN-GO" id="Q00169">
    <property type="GO annotations" value="5 GO annotations based on evolutionary models"/>
</dbReference>
<dbReference type="PhylomeDB" id="Q00169"/>
<dbReference type="TreeFam" id="TF313279"/>
<dbReference type="PathwayCommons" id="Q00169"/>
<dbReference type="Reactome" id="R-HSA-418890">
    <property type="pathway name" value="Role of second messengers in netrin-1 signaling"/>
</dbReference>
<dbReference type="Reactome" id="R-HSA-8950505">
    <property type="pathway name" value="Gene and protein expression by JAK-STAT signaling after Interleukin-12 stimulation"/>
</dbReference>
<dbReference type="SignaLink" id="Q00169"/>
<dbReference type="BioGRID-ORCS" id="5306">
    <property type="hits" value="17 hits in 1167 CRISPR screens"/>
</dbReference>
<dbReference type="CD-CODE" id="FB4E32DD">
    <property type="entry name" value="Presynaptic clusters and postsynaptic densities"/>
</dbReference>
<dbReference type="ChiTaRS" id="PITPNA">
    <property type="organism name" value="human"/>
</dbReference>
<dbReference type="EvolutionaryTrace" id="Q00169"/>
<dbReference type="GeneWiki" id="Phosphatidylinositol_transfer_protein,_alpha"/>
<dbReference type="GenomeRNAi" id="5306"/>
<dbReference type="Pharos" id="Q00169">
    <property type="development level" value="Tbio"/>
</dbReference>
<dbReference type="PRO" id="PR:Q00169"/>
<dbReference type="Proteomes" id="UP000005640">
    <property type="component" value="Chromosome 17"/>
</dbReference>
<dbReference type="RNAct" id="Q00169">
    <property type="molecule type" value="protein"/>
</dbReference>
<dbReference type="Bgee" id="ENSG00000174238">
    <property type="expression patterns" value="Expressed in pigmented layer of retina and 214 other cell types or tissues"/>
</dbReference>
<dbReference type="ExpressionAtlas" id="Q00169">
    <property type="expression patterns" value="baseline and differential"/>
</dbReference>
<dbReference type="GO" id="GO:0005737">
    <property type="term" value="C:cytoplasm"/>
    <property type="evidence" value="ECO:0000250"/>
    <property type="project" value="UniProtKB"/>
</dbReference>
<dbReference type="GO" id="GO:0005829">
    <property type="term" value="C:cytosol"/>
    <property type="evidence" value="ECO:0000304"/>
    <property type="project" value="Reactome"/>
</dbReference>
<dbReference type="GO" id="GO:0070062">
    <property type="term" value="C:extracellular exosome"/>
    <property type="evidence" value="ECO:0007005"/>
    <property type="project" value="UniProtKB"/>
</dbReference>
<dbReference type="GO" id="GO:0005634">
    <property type="term" value="C:nucleus"/>
    <property type="evidence" value="ECO:0000250"/>
    <property type="project" value="UniProtKB"/>
</dbReference>
<dbReference type="GO" id="GO:0008289">
    <property type="term" value="F:lipid binding"/>
    <property type="evidence" value="ECO:0000269"/>
    <property type="project" value="DisProt"/>
</dbReference>
<dbReference type="GO" id="GO:0031210">
    <property type="term" value="F:phosphatidylcholine binding"/>
    <property type="evidence" value="ECO:0000314"/>
    <property type="project" value="UniProtKB"/>
</dbReference>
<dbReference type="GO" id="GO:0120019">
    <property type="term" value="F:phosphatidylcholine transfer activity"/>
    <property type="evidence" value="ECO:0000314"/>
    <property type="project" value="UniProtKB"/>
</dbReference>
<dbReference type="GO" id="GO:0008525">
    <property type="term" value="F:phosphatidylcholine transporter activity"/>
    <property type="evidence" value="ECO:0000314"/>
    <property type="project" value="BHF-UCL"/>
</dbReference>
<dbReference type="GO" id="GO:1901611">
    <property type="term" value="F:phosphatidylglycerol binding"/>
    <property type="evidence" value="ECO:0000304"/>
    <property type="project" value="BHF-UCL"/>
</dbReference>
<dbReference type="GO" id="GO:0035091">
    <property type="term" value="F:phosphatidylinositol binding"/>
    <property type="evidence" value="ECO:0000314"/>
    <property type="project" value="UniProtKB"/>
</dbReference>
<dbReference type="GO" id="GO:0008526">
    <property type="term" value="F:phosphatidylinositol transfer activity"/>
    <property type="evidence" value="ECO:0000314"/>
    <property type="project" value="UniProtKB"/>
</dbReference>
<dbReference type="GO" id="GO:0007409">
    <property type="term" value="P:axonogenesis"/>
    <property type="evidence" value="ECO:0007669"/>
    <property type="project" value="Ensembl"/>
</dbReference>
<dbReference type="GO" id="GO:0006629">
    <property type="term" value="P:lipid metabolic process"/>
    <property type="evidence" value="ECO:0000303"/>
    <property type="project" value="ProtInc"/>
</dbReference>
<dbReference type="GO" id="GO:0015914">
    <property type="term" value="P:phospholipid transport"/>
    <property type="evidence" value="ECO:0000314"/>
    <property type="project" value="BHF-UCL"/>
</dbReference>
<dbReference type="GO" id="GO:0007601">
    <property type="term" value="P:visual perception"/>
    <property type="evidence" value="ECO:0000304"/>
    <property type="project" value="ProtInc"/>
</dbReference>
<dbReference type="CDD" id="cd08888">
    <property type="entry name" value="SRPBCC_PITPNA-B_like"/>
    <property type="match status" value="1"/>
</dbReference>
<dbReference type="DisProt" id="DP02327"/>
<dbReference type="FunFam" id="3.30.530.20:FF:000004">
    <property type="entry name" value="Phosphatidylinositol transfer protein alpha isoform"/>
    <property type="match status" value="1"/>
</dbReference>
<dbReference type="Gene3D" id="3.30.530.20">
    <property type="match status" value="1"/>
</dbReference>
<dbReference type="InterPro" id="IPR001666">
    <property type="entry name" value="PI_transfer"/>
</dbReference>
<dbReference type="InterPro" id="IPR055261">
    <property type="entry name" value="PI_transfer_N"/>
</dbReference>
<dbReference type="InterPro" id="IPR023393">
    <property type="entry name" value="START-like_dom_sf"/>
</dbReference>
<dbReference type="PANTHER" id="PTHR10658">
    <property type="entry name" value="PHOSPHATIDYLINOSITOL TRANSFER PROTEIN"/>
    <property type="match status" value="1"/>
</dbReference>
<dbReference type="PANTHER" id="PTHR10658:SF28">
    <property type="entry name" value="PHOSPHATIDYLINOSITOL TRANSFER PROTEIN ALPHA ISOFORM"/>
    <property type="match status" value="1"/>
</dbReference>
<dbReference type="Pfam" id="PF02121">
    <property type="entry name" value="IP_trans"/>
    <property type="match status" value="1"/>
</dbReference>
<dbReference type="PRINTS" id="PR00391">
    <property type="entry name" value="PITRANSFER"/>
</dbReference>
<dbReference type="SUPFAM" id="SSF55961">
    <property type="entry name" value="Bet v1-like"/>
    <property type="match status" value="1"/>
</dbReference>
<keyword id="KW-0002">3D-structure</keyword>
<keyword id="KW-0007">Acetylation</keyword>
<keyword id="KW-0963">Cytoplasm</keyword>
<keyword id="KW-0903">Direct protein sequencing</keyword>
<keyword id="KW-0445">Lipid transport</keyword>
<keyword id="KW-0446">Lipid-binding</keyword>
<keyword id="KW-0539">Nucleus</keyword>
<keyword id="KW-1267">Proteomics identification</keyword>
<keyword id="KW-1185">Reference proteome</keyword>
<keyword id="KW-0813">Transport</keyword>
<organism>
    <name type="scientific">Homo sapiens</name>
    <name type="common">Human</name>
    <dbReference type="NCBI Taxonomy" id="9606"/>
    <lineage>
        <taxon>Eukaryota</taxon>
        <taxon>Metazoa</taxon>
        <taxon>Chordata</taxon>
        <taxon>Craniata</taxon>
        <taxon>Vertebrata</taxon>
        <taxon>Euteleostomi</taxon>
        <taxon>Mammalia</taxon>
        <taxon>Eutheria</taxon>
        <taxon>Euarchontoglires</taxon>
        <taxon>Primates</taxon>
        <taxon>Haplorrhini</taxon>
        <taxon>Catarrhini</taxon>
        <taxon>Hominidae</taxon>
        <taxon>Homo</taxon>
    </lineage>
</organism>
<gene>
    <name type="primary">PITPNA</name>
    <name type="synonym">PITPN</name>
</gene>